<dbReference type="PIR" id="S07150">
    <property type="entry name" value="FDFILC"/>
</dbReference>
<dbReference type="SMR" id="P24028"/>
<dbReference type="GO" id="GO:0005576">
    <property type="term" value="C:extracellular region"/>
    <property type="evidence" value="ECO:0007669"/>
    <property type="project" value="UniProtKB-SubCell"/>
</dbReference>
<dbReference type="CDD" id="cd11617">
    <property type="entry name" value="Antifreeze_III"/>
    <property type="match status" value="1"/>
</dbReference>
<dbReference type="Gene3D" id="3.90.1210.10">
    <property type="entry name" value="Antifreeze-like/N-acetylneuraminic acid synthase C-terminal domain"/>
    <property type="match status" value="1"/>
</dbReference>
<dbReference type="InterPro" id="IPR006190">
    <property type="entry name" value="AFP_Neu5c_C"/>
</dbReference>
<dbReference type="InterPro" id="IPR036732">
    <property type="entry name" value="AFP_Neu5c_C_sf"/>
</dbReference>
<dbReference type="InterPro" id="IPR006013">
    <property type="entry name" value="Antifreeze_III"/>
</dbReference>
<dbReference type="InterPro" id="IPR013974">
    <property type="entry name" value="SAF"/>
</dbReference>
<dbReference type="Pfam" id="PF08666">
    <property type="entry name" value="SAF"/>
    <property type="match status" value="1"/>
</dbReference>
<dbReference type="PRINTS" id="PR00357">
    <property type="entry name" value="ANTIFREEZIII"/>
</dbReference>
<dbReference type="SUPFAM" id="SSF51269">
    <property type="entry name" value="AFP III-like domain"/>
    <property type="match status" value="1"/>
</dbReference>
<dbReference type="PROSITE" id="PS50844">
    <property type="entry name" value="AFP_LIKE"/>
    <property type="match status" value="1"/>
</dbReference>
<reference key="1">
    <citation type="journal article" date="1987" name="Biochim. Biophys. Acta">
        <title>Primary and secondary structure of antifreeze peptides from arctic and antarctic zoarcid fishes.</title>
        <authorList>
            <person name="Schrag J.D."/>
            <person name="Cheng C.-H.C."/>
            <person name="Panico M."/>
            <person name="Morris H.R."/>
            <person name="Devries A.L."/>
        </authorList>
    </citation>
    <scope>PROTEIN SEQUENCE</scope>
</reference>
<sequence>NKASVVANQLIPINTALTLVMMRAEVVTPAGIPAEDIPRLVGLQVNRAVLIGTTLMPDMVKGYAPQ</sequence>
<accession>P24028</accession>
<name>ANP1_LYCPO</name>
<keyword id="KW-0047">Antifreeze protein</keyword>
<keyword id="KW-0903">Direct protein sequencing</keyword>
<keyword id="KW-0964">Secreted</keyword>
<protein>
    <recommendedName>
        <fullName>Ice-structuring protein LP</fullName>
        <shortName>ISP LP</shortName>
    </recommendedName>
    <alternativeName>
        <fullName>Antifreeze protein LP</fullName>
    </alternativeName>
</protein>
<proteinExistence type="evidence at protein level"/>
<evidence type="ECO:0000250" key="1"/>
<evidence type="ECO:0000255" key="2">
    <source>
        <dbReference type="PROSITE-ProRule" id="PRU00021"/>
    </source>
</evidence>
<evidence type="ECO:0000305" key="3"/>
<comment type="function">
    <text evidence="1">Contributes to protect fish blood from freezing at subzero sea water temperatures. Lowers the blood freezing point. Binds to nascent ice crystals and prevents further growth (By similarity).</text>
</comment>
<comment type="subcellular location">
    <subcellularLocation>
        <location>Secreted</location>
    </subcellularLocation>
</comment>
<comment type="similarity">
    <text evidence="3">Belongs to the type-III AFP family.</text>
</comment>
<feature type="chain" id="PRO_0000155154" description="Ice-structuring protein LP">
    <location>
        <begin position="1"/>
        <end position="66"/>
    </location>
</feature>
<feature type="domain" description="AFP-like" evidence="2">
    <location>
        <begin position="4"/>
        <end position="63"/>
    </location>
</feature>
<feature type="site" description="Important for ice-binding" evidence="1">
    <location>
        <position position="9"/>
    </location>
</feature>
<feature type="site" description="Important for ice-binding" evidence="1">
    <location>
        <position position="14"/>
    </location>
</feature>
<feature type="site" description="Important for ice-binding" evidence="1">
    <location>
        <position position="18"/>
    </location>
</feature>
<feature type="site" description="Important for ice-binding" evidence="1">
    <location>
        <position position="44"/>
    </location>
</feature>
<organism>
    <name type="scientific">Lycodes polaris</name>
    <name type="common">Canadian eelpout</name>
    <dbReference type="NCBI Taxonomy" id="8197"/>
    <lineage>
        <taxon>Eukaryota</taxon>
        <taxon>Metazoa</taxon>
        <taxon>Chordata</taxon>
        <taxon>Craniata</taxon>
        <taxon>Vertebrata</taxon>
        <taxon>Euteleostomi</taxon>
        <taxon>Actinopterygii</taxon>
        <taxon>Neopterygii</taxon>
        <taxon>Teleostei</taxon>
        <taxon>Neoteleostei</taxon>
        <taxon>Acanthomorphata</taxon>
        <taxon>Eupercaria</taxon>
        <taxon>Perciformes</taxon>
        <taxon>Cottioidei</taxon>
        <taxon>Zoarcales</taxon>
        <taxon>Zoarcidae</taxon>
        <taxon>Lycodinae</taxon>
        <taxon>Lycodes</taxon>
    </lineage>
</organism>